<accession>B6I5I5</accession>
<keyword id="KW-0133">Cell shape</keyword>
<keyword id="KW-0961">Cell wall biogenesis/degradation</keyword>
<keyword id="KW-0413">Isomerase</keyword>
<keyword id="KW-0573">Peptidoglycan synthesis</keyword>
<protein>
    <recommendedName>
        <fullName evidence="1">Glutamate racemase</fullName>
        <ecNumber evidence="1">5.1.1.3</ecNumber>
    </recommendedName>
</protein>
<evidence type="ECO:0000255" key="1">
    <source>
        <dbReference type="HAMAP-Rule" id="MF_00258"/>
    </source>
</evidence>
<reference key="1">
    <citation type="journal article" date="2008" name="DNA Res.">
        <title>Complete genome sequence and comparative analysis of the wild-type commensal Escherichia coli strain SE11 isolated from a healthy adult.</title>
        <authorList>
            <person name="Oshima K."/>
            <person name="Toh H."/>
            <person name="Ogura Y."/>
            <person name="Sasamoto H."/>
            <person name="Morita H."/>
            <person name="Park S.-H."/>
            <person name="Ooka T."/>
            <person name="Iyoda S."/>
            <person name="Taylor T.D."/>
            <person name="Hayashi T."/>
            <person name="Itoh K."/>
            <person name="Hattori M."/>
        </authorList>
    </citation>
    <scope>NUCLEOTIDE SEQUENCE [LARGE SCALE GENOMIC DNA]</scope>
    <source>
        <strain>SE11</strain>
    </source>
</reference>
<gene>
    <name evidence="1" type="primary">murI</name>
    <name type="ordered locus">ECSE_4262</name>
</gene>
<dbReference type="EC" id="5.1.1.3" evidence="1"/>
<dbReference type="EMBL" id="AP009240">
    <property type="protein sequence ID" value="BAG79786.1"/>
    <property type="molecule type" value="Genomic_DNA"/>
</dbReference>
<dbReference type="RefSeq" id="WP_000201827.1">
    <property type="nucleotide sequence ID" value="NC_011415.1"/>
</dbReference>
<dbReference type="SMR" id="B6I5I5"/>
<dbReference type="GeneID" id="75203201"/>
<dbReference type="KEGG" id="ecy:ECSE_4262"/>
<dbReference type="HOGENOM" id="CLU_052344_2_0_6"/>
<dbReference type="UniPathway" id="UPA00219"/>
<dbReference type="Proteomes" id="UP000008199">
    <property type="component" value="Chromosome"/>
</dbReference>
<dbReference type="GO" id="GO:0008881">
    <property type="term" value="F:glutamate racemase activity"/>
    <property type="evidence" value="ECO:0007669"/>
    <property type="project" value="UniProtKB-UniRule"/>
</dbReference>
<dbReference type="GO" id="GO:0071555">
    <property type="term" value="P:cell wall organization"/>
    <property type="evidence" value="ECO:0007669"/>
    <property type="project" value="UniProtKB-KW"/>
</dbReference>
<dbReference type="GO" id="GO:0009252">
    <property type="term" value="P:peptidoglycan biosynthetic process"/>
    <property type="evidence" value="ECO:0007669"/>
    <property type="project" value="UniProtKB-UniRule"/>
</dbReference>
<dbReference type="GO" id="GO:0008360">
    <property type="term" value="P:regulation of cell shape"/>
    <property type="evidence" value="ECO:0007669"/>
    <property type="project" value="UniProtKB-KW"/>
</dbReference>
<dbReference type="FunFam" id="3.40.50.1860:FF:000002">
    <property type="entry name" value="Glutamate racemase"/>
    <property type="match status" value="1"/>
</dbReference>
<dbReference type="Gene3D" id="3.40.50.1860">
    <property type="match status" value="2"/>
</dbReference>
<dbReference type="HAMAP" id="MF_00258">
    <property type="entry name" value="Glu_racemase"/>
    <property type="match status" value="1"/>
</dbReference>
<dbReference type="InterPro" id="IPR015942">
    <property type="entry name" value="Asp/Glu/hydantoin_racemase"/>
</dbReference>
<dbReference type="InterPro" id="IPR001920">
    <property type="entry name" value="Asp/Glu_race"/>
</dbReference>
<dbReference type="InterPro" id="IPR018187">
    <property type="entry name" value="Asp/Glu_racemase_AS_1"/>
</dbReference>
<dbReference type="InterPro" id="IPR033134">
    <property type="entry name" value="Asp/Glu_racemase_AS_2"/>
</dbReference>
<dbReference type="InterPro" id="IPR004391">
    <property type="entry name" value="Glu_race"/>
</dbReference>
<dbReference type="NCBIfam" id="TIGR00067">
    <property type="entry name" value="glut_race"/>
    <property type="match status" value="1"/>
</dbReference>
<dbReference type="NCBIfam" id="NF002034">
    <property type="entry name" value="PRK00865.1-1"/>
    <property type="match status" value="1"/>
</dbReference>
<dbReference type="PANTHER" id="PTHR21198">
    <property type="entry name" value="GLUTAMATE RACEMASE"/>
    <property type="match status" value="1"/>
</dbReference>
<dbReference type="PANTHER" id="PTHR21198:SF2">
    <property type="entry name" value="GLUTAMATE RACEMASE"/>
    <property type="match status" value="1"/>
</dbReference>
<dbReference type="Pfam" id="PF01177">
    <property type="entry name" value="Asp_Glu_race"/>
    <property type="match status" value="1"/>
</dbReference>
<dbReference type="SUPFAM" id="SSF53681">
    <property type="entry name" value="Aspartate/glutamate racemase"/>
    <property type="match status" value="2"/>
</dbReference>
<dbReference type="PROSITE" id="PS00923">
    <property type="entry name" value="ASP_GLU_RACEMASE_1"/>
    <property type="match status" value="1"/>
</dbReference>
<dbReference type="PROSITE" id="PS00924">
    <property type="entry name" value="ASP_GLU_RACEMASE_2"/>
    <property type="match status" value="1"/>
</dbReference>
<organism>
    <name type="scientific">Escherichia coli (strain SE11)</name>
    <dbReference type="NCBI Taxonomy" id="409438"/>
    <lineage>
        <taxon>Bacteria</taxon>
        <taxon>Pseudomonadati</taxon>
        <taxon>Pseudomonadota</taxon>
        <taxon>Gammaproteobacteria</taxon>
        <taxon>Enterobacterales</taxon>
        <taxon>Enterobacteriaceae</taxon>
        <taxon>Escherichia</taxon>
    </lineage>
</organism>
<name>MURI_ECOSE</name>
<proteinExistence type="inferred from homology"/>
<comment type="function">
    <text evidence="1">Provides the (R)-glutamate required for cell wall biosynthesis.</text>
</comment>
<comment type="catalytic activity">
    <reaction evidence="1">
        <text>L-glutamate = D-glutamate</text>
        <dbReference type="Rhea" id="RHEA:12813"/>
        <dbReference type="ChEBI" id="CHEBI:29985"/>
        <dbReference type="ChEBI" id="CHEBI:29986"/>
        <dbReference type="EC" id="5.1.1.3"/>
    </reaction>
</comment>
<comment type="pathway">
    <text evidence="1">Cell wall biogenesis; peptidoglycan biosynthesis.</text>
</comment>
<comment type="similarity">
    <text evidence="1">Belongs to the aspartate/glutamate racemases family.</text>
</comment>
<feature type="chain" id="PRO_1000114042" description="Glutamate racemase">
    <location>
        <begin position="1"/>
        <end position="285"/>
    </location>
</feature>
<feature type="active site" description="Proton donor/acceptor" evidence="1">
    <location>
        <position position="92"/>
    </location>
</feature>
<feature type="active site" description="Proton donor/acceptor" evidence="1">
    <location>
        <position position="204"/>
    </location>
</feature>
<feature type="binding site" evidence="1">
    <location>
        <begin position="28"/>
        <end position="29"/>
    </location>
    <ligand>
        <name>substrate</name>
    </ligand>
</feature>
<feature type="binding site" evidence="1">
    <location>
        <begin position="60"/>
        <end position="61"/>
    </location>
    <ligand>
        <name>substrate</name>
    </ligand>
</feature>
<feature type="binding site" evidence="1">
    <location>
        <begin position="93"/>
        <end position="94"/>
    </location>
    <ligand>
        <name>substrate</name>
    </ligand>
</feature>
<feature type="binding site" evidence="1">
    <location>
        <begin position="205"/>
        <end position="206"/>
    </location>
    <ligand>
        <name>substrate</name>
    </ligand>
</feature>
<sequence length="285" mass="31132">MATKLQDGNTPCLAATPSEPRPTVLVFDSGVGGLSVYDEIRHLLPDLHYIYAFDNVAFPYGEKSEEFIVERVVAIVTAVQERYPLALAVVACNTASTVSLPALREKFDFPVVGVVPAIKPAARLTANGIVGLLATRGTVKRSYTHELIARFANECQIEMLGSAEMVELAEAKLHGEDVSLDALKRILRPWLRMKEPPDTVVLGCTHFPLLQEELLQVLPEGTRLVDSGAAIARRTAWLLEHEAPDAKSADANIAFCMAMTPEAEQLLPVLQRYGFETLEKLAVLG</sequence>